<proteinExistence type="evidence at protein level"/>
<organism>
    <name type="scientific">Homo sapiens</name>
    <name type="common">Human</name>
    <dbReference type="NCBI Taxonomy" id="9606"/>
    <lineage>
        <taxon>Eukaryota</taxon>
        <taxon>Metazoa</taxon>
        <taxon>Chordata</taxon>
        <taxon>Craniata</taxon>
        <taxon>Vertebrata</taxon>
        <taxon>Euteleostomi</taxon>
        <taxon>Mammalia</taxon>
        <taxon>Eutheria</taxon>
        <taxon>Euarchontoglires</taxon>
        <taxon>Primates</taxon>
        <taxon>Haplorrhini</taxon>
        <taxon>Catarrhini</taxon>
        <taxon>Hominidae</taxon>
        <taxon>Homo</taxon>
    </lineage>
</organism>
<accession>Q9UJC3</accession>
<accession>A8K8E9</accession>
<accession>A8MU44</accession>
<accession>B4DX15</accession>
<accession>O60561</accession>
<accession>Q5TG44</accession>
<feature type="chain" id="PRO_0000219192" description="Protein Hook homolog 1">
    <location>
        <begin position="1"/>
        <end position="728"/>
    </location>
</feature>
<feature type="domain" description="Calponin-homology (CH)" evidence="3">
    <location>
        <begin position="12"/>
        <end position="128"/>
    </location>
</feature>
<feature type="region of interest" description="Sufficient for interaction with microtubules">
    <location>
        <begin position="1"/>
        <end position="555"/>
    </location>
</feature>
<feature type="region of interest" description="Sufficient for homodimerization, interaction wit HOOK2, HOOK3 and AP4M1" evidence="10">
    <location>
        <begin position="169"/>
        <end position="444"/>
    </location>
</feature>
<feature type="region of interest" description="Disordered" evidence="4">
    <location>
        <begin position="481"/>
        <end position="512"/>
    </location>
</feature>
<feature type="region of interest" description="Sufficient for interaction with AKTIP and VPS18" evidence="8">
    <location>
        <begin position="657"/>
        <end position="728"/>
    </location>
</feature>
<feature type="coiled-coil region" evidence="2">
    <location>
        <begin position="169"/>
        <end position="434"/>
    </location>
</feature>
<feature type="coiled-coil region" evidence="2">
    <location>
        <begin position="477"/>
        <end position="658"/>
    </location>
</feature>
<feature type="compositionally biased region" description="Basic and acidic residues" evidence="4">
    <location>
        <begin position="503"/>
        <end position="512"/>
    </location>
</feature>
<feature type="modified residue" description="N-acetylmethionine" evidence="16">
    <location>
        <position position="1"/>
    </location>
</feature>
<feature type="modified residue" description="Phosphoserine" evidence="14 15 17 19 20">
    <location>
        <position position="235"/>
    </location>
</feature>
<feature type="modified residue" description="Phosphothreonine" evidence="14">
    <location>
        <position position="699"/>
    </location>
</feature>
<feature type="modified residue" description="Phosphoserine" evidence="18">
    <location>
        <position position="719"/>
    </location>
</feature>
<feature type="modified residue" description="Phosphoserine" evidence="1">
    <location>
        <position position="727"/>
    </location>
</feature>
<feature type="splice variant" id="VSP_056226" description="In isoform 2." evidence="11">
    <location>
        <begin position="1"/>
        <end position="42"/>
    </location>
</feature>
<feature type="sequence variant" id="VAR_035709" description="In a breast cancer sample; somatic mutation; dbSNP:rs2098411832." evidence="7">
    <original>S</original>
    <variation>L</variation>
    <location>
        <position position="433"/>
    </location>
</feature>
<feature type="sequence variant" id="VAR_077930" description="In dbSNP:rs1008809819." evidence="9">
    <original>G</original>
    <variation>S</variation>
    <location>
        <position position="689"/>
    </location>
</feature>
<feature type="mutagenesis site" description="Abrogates interaction with AKTIP, VPS16, VPS18, VPS39 and VPS41, AP4M1, FHIP1B, decreases interaction with HOOK2 but does not affect interaction withHOOK3; when associated with 669-A-A-670." evidence="8 10">
    <original>EE</original>
    <variation>AA</variation>
    <location>
        <begin position="661"/>
        <end position="662"/>
    </location>
</feature>
<feature type="mutagenesis site" description="Abrogates interaction with AKTIP, VPS16, VPS18, VPS39 and VPS41, AP4M1, FHIP1B, decreases interaction with HOOK2 but does not affect interaction withHOOK3; when associated with 661-A-A-662." evidence="8 10">
    <original>WY</original>
    <variation>AA</variation>
    <location>
        <begin position="669"/>
        <end position="670"/>
    </location>
</feature>
<keyword id="KW-0007">Acetylation</keyword>
<keyword id="KW-0025">Alternative splicing</keyword>
<keyword id="KW-0175">Coiled coil</keyword>
<keyword id="KW-0963">Cytoplasm</keyword>
<keyword id="KW-0206">Cytoskeleton</keyword>
<keyword id="KW-0217">Developmental protein</keyword>
<keyword id="KW-0221">Differentiation</keyword>
<keyword id="KW-0493">Microtubule</keyword>
<keyword id="KW-0597">Phosphoprotein</keyword>
<keyword id="KW-0653">Protein transport</keyword>
<keyword id="KW-1267">Proteomics identification</keyword>
<keyword id="KW-1185">Reference proteome</keyword>
<keyword id="KW-0744">Spermatogenesis</keyword>
<keyword id="KW-0813">Transport</keyword>
<reference key="1">
    <citation type="journal article" date="1999" name="Genetics">
        <title>Genetic analysis of hook, a gene required for endocytic trafficking in Drosophila.</title>
        <authorList>
            <person name="Kraemer H."/>
            <person name="Phistry M."/>
        </authorList>
    </citation>
    <scope>NUCLEOTIDE SEQUENCE [MRNA] (ISOFORM 1)</scope>
</reference>
<reference key="2">
    <citation type="journal article" date="2004" name="Nat. Genet.">
        <title>Complete sequencing and characterization of 21,243 full-length human cDNAs.</title>
        <authorList>
            <person name="Ota T."/>
            <person name="Suzuki Y."/>
            <person name="Nishikawa T."/>
            <person name="Otsuki T."/>
            <person name="Sugiyama T."/>
            <person name="Irie R."/>
            <person name="Wakamatsu A."/>
            <person name="Hayashi K."/>
            <person name="Sato H."/>
            <person name="Nagai K."/>
            <person name="Kimura K."/>
            <person name="Makita H."/>
            <person name="Sekine M."/>
            <person name="Obayashi M."/>
            <person name="Nishi T."/>
            <person name="Shibahara T."/>
            <person name="Tanaka T."/>
            <person name="Ishii S."/>
            <person name="Yamamoto J."/>
            <person name="Saito K."/>
            <person name="Kawai Y."/>
            <person name="Isono Y."/>
            <person name="Nakamura Y."/>
            <person name="Nagahari K."/>
            <person name="Murakami K."/>
            <person name="Yasuda T."/>
            <person name="Iwayanagi T."/>
            <person name="Wagatsuma M."/>
            <person name="Shiratori A."/>
            <person name="Sudo H."/>
            <person name="Hosoiri T."/>
            <person name="Kaku Y."/>
            <person name="Kodaira H."/>
            <person name="Kondo H."/>
            <person name="Sugawara M."/>
            <person name="Takahashi M."/>
            <person name="Kanda K."/>
            <person name="Yokoi T."/>
            <person name="Furuya T."/>
            <person name="Kikkawa E."/>
            <person name="Omura Y."/>
            <person name="Abe K."/>
            <person name="Kamihara K."/>
            <person name="Katsuta N."/>
            <person name="Sato K."/>
            <person name="Tanikawa M."/>
            <person name="Yamazaki M."/>
            <person name="Ninomiya K."/>
            <person name="Ishibashi T."/>
            <person name="Yamashita H."/>
            <person name="Murakawa K."/>
            <person name="Fujimori K."/>
            <person name="Tanai H."/>
            <person name="Kimata M."/>
            <person name="Watanabe M."/>
            <person name="Hiraoka S."/>
            <person name="Chiba Y."/>
            <person name="Ishida S."/>
            <person name="Ono Y."/>
            <person name="Takiguchi S."/>
            <person name="Watanabe S."/>
            <person name="Yosida M."/>
            <person name="Hotuta T."/>
            <person name="Kusano J."/>
            <person name="Kanehori K."/>
            <person name="Takahashi-Fujii A."/>
            <person name="Hara H."/>
            <person name="Tanase T.-O."/>
            <person name="Nomura Y."/>
            <person name="Togiya S."/>
            <person name="Komai F."/>
            <person name="Hara R."/>
            <person name="Takeuchi K."/>
            <person name="Arita M."/>
            <person name="Imose N."/>
            <person name="Musashino K."/>
            <person name="Yuuki H."/>
            <person name="Oshima A."/>
            <person name="Sasaki N."/>
            <person name="Aotsuka S."/>
            <person name="Yoshikawa Y."/>
            <person name="Matsunawa H."/>
            <person name="Ichihara T."/>
            <person name="Shiohata N."/>
            <person name="Sano S."/>
            <person name="Moriya S."/>
            <person name="Momiyama H."/>
            <person name="Satoh N."/>
            <person name="Takami S."/>
            <person name="Terashima Y."/>
            <person name="Suzuki O."/>
            <person name="Nakagawa S."/>
            <person name="Senoh A."/>
            <person name="Mizoguchi H."/>
            <person name="Goto Y."/>
            <person name="Shimizu F."/>
            <person name="Wakebe H."/>
            <person name="Hishigaki H."/>
            <person name="Watanabe T."/>
            <person name="Sugiyama A."/>
            <person name="Takemoto M."/>
            <person name="Kawakami B."/>
            <person name="Yamazaki M."/>
            <person name="Watanabe K."/>
            <person name="Kumagai A."/>
            <person name="Itakura S."/>
            <person name="Fukuzumi Y."/>
            <person name="Fujimori Y."/>
            <person name="Komiyama M."/>
            <person name="Tashiro H."/>
            <person name="Tanigami A."/>
            <person name="Fujiwara T."/>
            <person name="Ono T."/>
            <person name="Yamada K."/>
            <person name="Fujii Y."/>
            <person name="Ozaki K."/>
            <person name="Hirao M."/>
            <person name="Ohmori Y."/>
            <person name="Kawabata A."/>
            <person name="Hikiji T."/>
            <person name="Kobatake N."/>
            <person name="Inagaki H."/>
            <person name="Ikema Y."/>
            <person name="Okamoto S."/>
            <person name="Okitani R."/>
            <person name="Kawakami T."/>
            <person name="Noguchi S."/>
            <person name="Itoh T."/>
            <person name="Shigeta K."/>
            <person name="Senba T."/>
            <person name="Matsumura K."/>
            <person name="Nakajima Y."/>
            <person name="Mizuno T."/>
            <person name="Morinaga M."/>
            <person name="Sasaki M."/>
            <person name="Togashi T."/>
            <person name="Oyama M."/>
            <person name="Hata H."/>
            <person name="Watanabe M."/>
            <person name="Komatsu T."/>
            <person name="Mizushima-Sugano J."/>
            <person name="Satoh T."/>
            <person name="Shirai Y."/>
            <person name="Takahashi Y."/>
            <person name="Nakagawa K."/>
            <person name="Okumura K."/>
            <person name="Nagase T."/>
            <person name="Nomura N."/>
            <person name="Kikuchi H."/>
            <person name="Masuho Y."/>
            <person name="Yamashita R."/>
            <person name="Nakai K."/>
            <person name="Yada T."/>
            <person name="Nakamura Y."/>
            <person name="Ohara O."/>
            <person name="Isogai T."/>
            <person name="Sugano S."/>
        </authorList>
    </citation>
    <scope>NUCLEOTIDE SEQUENCE [LARGE SCALE MRNA] (ISOFORMS 1 AND 2)</scope>
    <source>
        <tissue>Testis</tissue>
    </source>
</reference>
<reference key="3">
    <citation type="journal article" date="2006" name="Nature">
        <title>The DNA sequence and biological annotation of human chromosome 1.</title>
        <authorList>
            <person name="Gregory S.G."/>
            <person name="Barlow K.F."/>
            <person name="McLay K.E."/>
            <person name="Kaul R."/>
            <person name="Swarbreck D."/>
            <person name="Dunham A."/>
            <person name="Scott C.E."/>
            <person name="Howe K.L."/>
            <person name="Woodfine K."/>
            <person name="Spencer C.C.A."/>
            <person name="Jones M.C."/>
            <person name="Gillson C."/>
            <person name="Searle S."/>
            <person name="Zhou Y."/>
            <person name="Kokocinski F."/>
            <person name="McDonald L."/>
            <person name="Evans R."/>
            <person name="Phillips K."/>
            <person name="Atkinson A."/>
            <person name="Cooper R."/>
            <person name="Jones C."/>
            <person name="Hall R.E."/>
            <person name="Andrews T.D."/>
            <person name="Lloyd C."/>
            <person name="Ainscough R."/>
            <person name="Almeida J.P."/>
            <person name="Ambrose K.D."/>
            <person name="Anderson F."/>
            <person name="Andrew R.W."/>
            <person name="Ashwell R.I.S."/>
            <person name="Aubin K."/>
            <person name="Babbage A.K."/>
            <person name="Bagguley C.L."/>
            <person name="Bailey J."/>
            <person name="Beasley H."/>
            <person name="Bethel G."/>
            <person name="Bird C.P."/>
            <person name="Bray-Allen S."/>
            <person name="Brown J.Y."/>
            <person name="Brown A.J."/>
            <person name="Buckley D."/>
            <person name="Burton J."/>
            <person name="Bye J."/>
            <person name="Carder C."/>
            <person name="Chapman J.C."/>
            <person name="Clark S.Y."/>
            <person name="Clarke G."/>
            <person name="Clee C."/>
            <person name="Cobley V."/>
            <person name="Collier R.E."/>
            <person name="Corby N."/>
            <person name="Coville G.J."/>
            <person name="Davies J."/>
            <person name="Deadman R."/>
            <person name="Dunn M."/>
            <person name="Earthrowl M."/>
            <person name="Ellington A.G."/>
            <person name="Errington H."/>
            <person name="Frankish A."/>
            <person name="Frankland J."/>
            <person name="French L."/>
            <person name="Garner P."/>
            <person name="Garnett J."/>
            <person name="Gay L."/>
            <person name="Ghori M.R.J."/>
            <person name="Gibson R."/>
            <person name="Gilby L.M."/>
            <person name="Gillett W."/>
            <person name="Glithero R.J."/>
            <person name="Grafham D.V."/>
            <person name="Griffiths C."/>
            <person name="Griffiths-Jones S."/>
            <person name="Grocock R."/>
            <person name="Hammond S."/>
            <person name="Harrison E.S.I."/>
            <person name="Hart E."/>
            <person name="Haugen E."/>
            <person name="Heath P.D."/>
            <person name="Holmes S."/>
            <person name="Holt K."/>
            <person name="Howden P.J."/>
            <person name="Hunt A.R."/>
            <person name="Hunt S.E."/>
            <person name="Hunter G."/>
            <person name="Isherwood J."/>
            <person name="James R."/>
            <person name="Johnson C."/>
            <person name="Johnson D."/>
            <person name="Joy A."/>
            <person name="Kay M."/>
            <person name="Kershaw J.K."/>
            <person name="Kibukawa M."/>
            <person name="Kimberley A.M."/>
            <person name="King A."/>
            <person name="Knights A.J."/>
            <person name="Lad H."/>
            <person name="Laird G."/>
            <person name="Lawlor S."/>
            <person name="Leongamornlert D.A."/>
            <person name="Lloyd D.M."/>
            <person name="Loveland J."/>
            <person name="Lovell J."/>
            <person name="Lush M.J."/>
            <person name="Lyne R."/>
            <person name="Martin S."/>
            <person name="Mashreghi-Mohammadi M."/>
            <person name="Matthews L."/>
            <person name="Matthews N.S.W."/>
            <person name="McLaren S."/>
            <person name="Milne S."/>
            <person name="Mistry S."/>
            <person name="Moore M.J.F."/>
            <person name="Nickerson T."/>
            <person name="O'Dell C.N."/>
            <person name="Oliver K."/>
            <person name="Palmeiri A."/>
            <person name="Palmer S.A."/>
            <person name="Parker A."/>
            <person name="Patel D."/>
            <person name="Pearce A.V."/>
            <person name="Peck A.I."/>
            <person name="Pelan S."/>
            <person name="Phelps K."/>
            <person name="Phillimore B.J."/>
            <person name="Plumb R."/>
            <person name="Rajan J."/>
            <person name="Raymond C."/>
            <person name="Rouse G."/>
            <person name="Saenphimmachak C."/>
            <person name="Sehra H.K."/>
            <person name="Sheridan E."/>
            <person name="Shownkeen R."/>
            <person name="Sims S."/>
            <person name="Skuce C.D."/>
            <person name="Smith M."/>
            <person name="Steward C."/>
            <person name="Subramanian S."/>
            <person name="Sycamore N."/>
            <person name="Tracey A."/>
            <person name="Tromans A."/>
            <person name="Van Helmond Z."/>
            <person name="Wall M."/>
            <person name="Wallis J.M."/>
            <person name="White S."/>
            <person name="Whitehead S.L."/>
            <person name="Wilkinson J.E."/>
            <person name="Willey D.L."/>
            <person name="Williams H."/>
            <person name="Wilming L."/>
            <person name="Wray P.W."/>
            <person name="Wu Z."/>
            <person name="Coulson A."/>
            <person name="Vaudin M."/>
            <person name="Sulston J.E."/>
            <person name="Durbin R.M."/>
            <person name="Hubbard T."/>
            <person name="Wooster R."/>
            <person name="Dunham I."/>
            <person name="Carter N.P."/>
            <person name="McVean G."/>
            <person name="Ross M.T."/>
            <person name="Harrow J."/>
            <person name="Olson M.V."/>
            <person name="Beck S."/>
            <person name="Rogers J."/>
            <person name="Bentley D.R."/>
        </authorList>
    </citation>
    <scope>NUCLEOTIDE SEQUENCE [LARGE SCALE GENOMIC DNA]</scope>
</reference>
<reference key="4">
    <citation type="submission" date="2005-09" db="EMBL/GenBank/DDBJ databases">
        <authorList>
            <person name="Mural R.J."/>
            <person name="Istrail S."/>
            <person name="Sutton G.G."/>
            <person name="Florea L."/>
            <person name="Halpern A.L."/>
            <person name="Mobarry C.M."/>
            <person name="Lippert R."/>
            <person name="Walenz B."/>
            <person name="Shatkay H."/>
            <person name="Dew I."/>
            <person name="Miller J.R."/>
            <person name="Flanigan M.J."/>
            <person name="Edwards N.J."/>
            <person name="Bolanos R."/>
            <person name="Fasulo D."/>
            <person name="Halldorsson B.V."/>
            <person name="Hannenhalli S."/>
            <person name="Turner R."/>
            <person name="Yooseph S."/>
            <person name="Lu F."/>
            <person name="Nusskern D.R."/>
            <person name="Shue B.C."/>
            <person name="Zheng X.H."/>
            <person name="Zhong F."/>
            <person name="Delcher A.L."/>
            <person name="Huson D.H."/>
            <person name="Kravitz S.A."/>
            <person name="Mouchard L."/>
            <person name="Reinert K."/>
            <person name="Remington K.A."/>
            <person name="Clark A.G."/>
            <person name="Waterman M.S."/>
            <person name="Eichler E.E."/>
            <person name="Adams M.D."/>
            <person name="Hunkapiller M.W."/>
            <person name="Myers E.W."/>
            <person name="Venter J.C."/>
        </authorList>
    </citation>
    <scope>NUCLEOTIDE SEQUENCE [LARGE SCALE GENOMIC DNA]</scope>
</reference>
<reference key="5">
    <citation type="journal article" date="2004" name="Genome Res.">
        <title>The status, quality, and expansion of the NIH full-length cDNA project: the Mammalian Gene Collection (MGC).</title>
        <authorList>
            <consortium name="The MGC Project Team"/>
        </authorList>
    </citation>
    <scope>NUCLEOTIDE SEQUENCE [LARGE SCALE MRNA] (ISOFORM 1)</scope>
    <source>
        <tissue>Placenta</tissue>
    </source>
</reference>
<reference key="6">
    <citation type="journal article" date="2001" name="J. Cell Biol.">
        <title>The Golgi-associated hook3 protein is a member of a novel family of microtubule-binding proteins.</title>
        <authorList>
            <person name="Walenta J.H."/>
            <person name="Didier A.J."/>
            <person name="Liu X."/>
            <person name="Kraemer H."/>
        </authorList>
    </citation>
    <scope>INTERACTION WITH MICROTUBULES</scope>
    <scope>SUBCELLULAR LOCATION</scope>
</reference>
<reference key="7">
    <citation type="journal article" date="2004" name="Hum. Mol. Genet.">
        <title>Interconnections of CLN3, Hook1 and Rab proteins link Batten disease to defects in the endocytic pathway.</title>
        <authorList>
            <person name="Luiro K."/>
            <person name="Yliannala K."/>
            <person name="Ahtiainen L."/>
            <person name="Maunu H."/>
            <person name="Jaervelae I."/>
            <person name="Kyttaelae A."/>
            <person name="Jalanko A."/>
        </authorList>
    </citation>
    <scope>INTERACTION WITH CLN3</scope>
    <scope>SUBCELLULAR LOCATION</scope>
</reference>
<reference key="8">
    <citation type="journal article" date="2006" name="Nat. Biotechnol.">
        <title>A probability-based approach for high-throughput protein phosphorylation analysis and site localization.</title>
        <authorList>
            <person name="Beausoleil S.A."/>
            <person name="Villen J."/>
            <person name="Gerber S.A."/>
            <person name="Rush J."/>
            <person name="Gygi S.P."/>
        </authorList>
    </citation>
    <scope>PHOSPHORYLATION [LARGE SCALE ANALYSIS] AT SER-235 AND THR-699</scope>
    <scope>IDENTIFICATION BY MASS SPECTROMETRY [LARGE SCALE ANALYSIS]</scope>
    <source>
        <tissue>Cervix carcinoma</tissue>
    </source>
</reference>
<reference key="9">
    <citation type="journal article" date="2008" name="Mol. Biol. Cell">
        <title>An FTS/Hook/p107(FHIP) complex interacts with and promotes endosomal clustering by the homotypic vacuolar protein sorting complex.</title>
        <authorList>
            <person name="Xu L."/>
            <person name="Sowa M.E."/>
            <person name="Chen J."/>
            <person name="Li X."/>
            <person name="Gygi S.P."/>
            <person name="Harper J.W."/>
        </authorList>
    </citation>
    <scope>IDENTIFICATION BY MASS SPECTROMETRY</scope>
    <scope>IDENTIFICATION IN THE FHF COMPLEX</scope>
    <scope>SELF-ASSOCIATION</scope>
    <scope>INTERACTION WITH AKTIP; HOOK2; HOOK3; VPS16; VPS18; VPS39 AND VPS41</scope>
    <scope>MUTAGENESIS OF 661-GLU-GLU-662 AND 669-TRP-TYR-670</scope>
</reference>
<reference key="10">
    <citation type="journal article" date="2008" name="Proc. Natl. Acad. Sci. U.S.A.">
        <title>A quantitative atlas of mitotic phosphorylation.</title>
        <authorList>
            <person name="Dephoure N."/>
            <person name="Zhou C."/>
            <person name="Villen J."/>
            <person name="Beausoleil S.A."/>
            <person name="Bakalarski C.E."/>
            <person name="Elledge S.J."/>
            <person name="Gygi S.P."/>
        </authorList>
    </citation>
    <scope>PHOSPHORYLATION [LARGE SCALE ANALYSIS] AT SER-235</scope>
    <scope>IDENTIFICATION BY MASS SPECTROMETRY [LARGE SCALE ANALYSIS]</scope>
    <source>
        <tissue>Cervix carcinoma</tissue>
    </source>
</reference>
<reference key="11">
    <citation type="journal article" date="2009" name="Anal. Chem.">
        <title>Lys-N and trypsin cover complementary parts of the phosphoproteome in a refined SCX-based approach.</title>
        <authorList>
            <person name="Gauci S."/>
            <person name="Helbig A.O."/>
            <person name="Slijper M."/>
            <person name="Krijgsveld J."/>
            <person name="Heck A.J."/>
            <person name="Mohammed S."/>
        </authorList>
    </citation>
    <scope>ACETYLATION [LARGE SCALE ANALYSIS] AT MET-1</scope>
    <scope>IDENTIFICATION BY MASS SPECTROMETRY [LARGE SCALE ANALYSIS]</scope>
</reference>
<reference key="12">
    <citation type="journal article" date="2010" name="Sci. Signal.">
        <title>Quantitative phosphoproteomics reveals widespread full phosphorylation site occupancy during mitosis.</title>
        <authorList>
            <person name="Olsen J.V."/>
            <person name="Vermeulen M."/>
            <person name="Santamaria A."/>
            <person name="Kumar C."/>
            <person name="Miller M.L."/>
            <person name="Jensen L.J."/>
            <person name="Gnad F."/>
            <person name="Cox J."/>
            <person name="Jensen T.S."/>
            <person name="Nigg E.A."/>
            <person name="Brunak S."/>
            <person name="Mann M."/>
        </authorList>
    </citation>
    <scope>PHOSPHORYLATION [LARGE SCALE ANALYSIS] AT SER-235</scope>
    <scope>IDENTIFICATION BY MASS SPECTROMETRY [LARGE SCALE ANALYSIS]</scope>
    <source>
        <tissue>Cervix carcinoma</tissue>
    </source>
</reference>
<reference key="13">
    <citation type="journal article" date="2011" name="Sci. Signal.">
        <title>System-wide temporal characterization of the proteome and phosphoproteome of human embryonic stem cell differentiation.</title>
        <authorList>
            <person name="Rigbolt K.T."/>
            <person name="Prokhorova T.A."/>
            <person name="Akimov V."/>
            <person name="Henningsen J."/>
            <person name="Johansen P.T."/>
            <person name="Kratchmarova I."/>
            <person name="Kassem M."/>
            <person name="Mann M."/>
            <person name="Olsen J.V."/>
            <person name="Blagoev B."/>
        </authorList>
    </citation>
    <scope>PHOSPHORYLATION [LARGE SCALE ANALYSIS] AT SER-719</scope>
    <scope>IDENTIFICATION BY MASS SPECTROMETRY [LARGE SCALE ANALYSIS]</scope>
</reference>
<reference key="14">
    <citation type="journal article" date="2013" name="J. Proteome Res.">
        <title>Toward a comprehensive characterization of a human cancer cell phosphoproteome.</title>
        <authorList>
            <person name="Zhou H."/>
            <person name="Di Palma S."/>
            <person name="Preisinger C."/>
            <person name="Peng M."/>
            <person name="Polat A.N."/>
            <person name="Heck A.J."/>
            <person name="Mohammed S."/>
        </authorList>
    </citation>
    <scope>PHOSPHORYLATION [LARGE SCALE ANALYSIS] AT SER-235</scope>
    <scope>IDENTIFICATION BY MASS SPECTROMETRY [LARGE SCALE ANALYSIS]</scope>
    <source>
        <tissue>Cervix carcinoma</tissue>
    </source>
</reference>
<reference key="15">
    <citation type="journal article" date="2014" name="J. Proteomics">
        <title>An enzyme assisted RP-RPLC approach for in-depth analysis of human liver phosphoproteome.</title>
        <authorList>
            <person name="Bian Y."/>
            <person name="Song C."/>
            <person name="Cheng K."/>
            <person name="Dong M."/>
            <person name="Wang F."/>
            <person name="Huang J."/>
            <person name="Sun D."/>
            <person name="Wang L."/>
            <person name="Ye M."/>
            <person name="Zou H."/>
        </authorList>
    </citation>
    <scope>PHOSPHORYLATION [LARGE SCALE ANALYSIS] AT SER-235</scope>
    <scope>IDENTIFICATION BY MASS SPECTROMETRY [LARGE SCALE ANALYSIS]</scope>
    <source>
        <tissue>Liver</tissue>
    </source>
</reference>
<reference key="16">
    <citation type="journal article" date="2020" name="Mol. Biol. Cell">
        <title>The FTS-Hook-FHIP (FHF) complex interacts with AP-4 to mediate perinuclear distribution of AP-4 and its cargo ATG9A.</title>
        <authorList>
            <person name="Mattera R."/>
            <person name="Williamson C.D."/>
            <person name="Ren X."/>
            <person name="Bonifacino J.S."/>
        </authorList>
    </citation>
    <scope>FUNCTION</scope>
    <scope>INTERACTION WITH AP4M1; AKTIP; FHIP1B; HOOK2 AND HOOK3</scope>
    <scope>SUBUNIT</scope>
    <scope>MUTAGENESIS OF 661-GLU-GLU-662 AND 669-TRP-TYR-670</scope>
</reference>
<reference key="17">
    <citation type="journal article" date="2006" name="Science">
        <title>The consensus coding sequences of human breast and colorectal cancers.</title>
        <authorList>
            <person name="Sjoeblom T."/>
            <person name="Jones S."/>
            <person name="Wood L.D."/>
            <person name="Parsons D.W."/>
            <person name="Lin J."/>
            <person name="Barber T.D."/>
            <person name="Mandelker D."/>
            <person name="Leary R.J."/>
            <person name="Ptak J."/>
            <person name="Silliman N."/>
            <person name="Szabo S."/>
            <person name="Buckhaults P."/>
            <person name="Farrell C."/>
            <person name="Meeh P."/>
            <person name="Markowitz S.D."/>
            <person name="Willis J."/>
            <person name="Dawson D."/>
            <person name="Willson J.K.V."/>
            <person name="Gazdar A.F."/>
            <person name="Hartigan J."/>
            <person name="Wu L."/>
            <person name="Liu C."/>
            <person name="Parmigiani G."/>
            <person name="Park B.H."/>
            <person name="Bachman K.E."/>
            <person name="Papadopoulos N."/>
            <person name="Vogelstein B."/>
            <person name="Kinzler K.W."/>
            <person name="Velculescu V.E."/>
        </authorList>
    </citation>
    <scope>VARIANT [LARGE SCALE ANALYSIS] LEU-433</scope>
</reference>
<reference key="18">
    <citation type="journal article" date="2016" name="Ann. Neurol.">
        <title>DNAJC6 mutations associated with early-onset Parkinson's disease.</title>
        <authorList>
            <consortium name="International Parkinsonism Genetics Network"/>
            <person name="Olgiati S."/>
            <person name="Quadri M."/>
            <person name="Fang M."/>
            <person name="Rood J.P."/>
            <person name="Saute J.A."/>
            <person name="Chien H.F."/>
            <person name="Bouwkamp C.G."/>
            <person name="Graafland J."/>
            <person name="Minneboo M."/>
            <person name="Breedveld G.J."/>
            <person name="Zhang J."/>
            <person name="Verheijen F.W."/>
            <person name="Boon A.J."/>
            <person name="Kievit A.J."/>
            <person name="Jardim L.B."/>
            <person name="Mandemakers W."/>
            <person name="Barbosa E.R."/>
            <person name="Rieder C.R."/>
            <person name="Leenders K.L."/>
            <person name="Wang J."/>
            <person name="Bonifati V."/>
        </authorList>
    </citation>
    <scope>VARIANT SER-689</scope>
</reference>
<name>HOOK1_HUMAN</name>
<evidence type="ECO:0000250" key="1">
    <source>
        <dbReference type="UniProtKB" id="Q8BIL5"/>
    </source>
</evidence>
<evidence type="ECO:0000255" key="2"/>
<evidence type="ECO:0000255" key="3">
    <source>
        <dbReference type="PROSITE-ProRule" id="PRU00044"/>
    </source>
</evidence>
<evidence type="ECO:0000256" key="4">
    <source>
        <dbReference type="SAM" id="MobiDB-lite"/>
    </source>
</evidence>
<evidence type="ECO:0000269" key="5">
    <source>
    </source>
</evidence>
<evidence type="ECO:0000269" key="6">
    <source>
    </source>
</evidence>
<evidence type="ECO:0000269" key="7">
    <source>
    </source>
</evidence>
<evidence type="ECO:0000269" key="8">
    <source>
    </source>
</evidence>
<evidence type="ECO:0000269" key="9">
    <source>
    </source>
</evidence>
<evidence type="ECO:0000269" key="10">
    <source>
    </source>
</evidence>
<evidence type="ECO:0000303" key="11">
    <source>
    </source>
</evidence>
<evidence type="ECO:0000305" key="12"/>
<evidence type="ECO:0000312" key="13">
    <source>
        <dbReference type="HGNC" id="HGNC:19884"/>
    </source>
</evidence>
<evidence type="ECO:0007744" key="14">
    <source>
    </source>
</evidence>
<evidence type="ECO:0007744" key="15">
    <source>
    </source>
</evidence>
<evidence type="ECO:0007744" key="16">
    <source>
    </source>
</evidence>
<evidence type="ECO:0007744" key="17">
    <source>
    </source>
</evidence>
<evidence type="ECO:0007744" key="18">
    <source>
    </source>
</evidence>
<evidence type="ECO:0007744" key="19">
    <source>
    </source>
</evidence>
<evidence type="ECO:0007744" key="20">
    <source>
    </source>
</evidence>
<gene>
    <name evidence="13" type="primary">HOOK1</name>
</gene>
<dbReference type="EMBL" id="AF044923">
    <property type="protein sequence ID" value="AAC09298.1"/>
    <property type="molecule type" value="mRNA"/>
</dbReference>
<dbReference type="EMBL" id="AK292314">
    <property type="protein sequence ID" value="BAF85003.1"/>
    <property type="molecule type" value="mRNA"/>
</dbReference>
<dbReference type="EMBL" id="AK301768">
    <property type="protein sequence ID" value="BAG63227.1"/>
    <property type="molecule type" value="mRNA"/>
</dbReference>
<dbReference type="EMBL" id="AC113175">
    <property type="status" value="NOT_ANNOTATED_CDS"/>
    <property type="molecule type" value="Genomic_DNA"/>
</dbReference>
<dbReference type="EMBL" id="AL035416">
    <property type="status" value="NOT_ANNOTATED_CDS"/>
    <property type="molecule type" value="Genomic_DNA"/>
</dbReference>
<dbReference type="EMBL" id="CH471059">
    <property type="protein sequence ID" value="EAX06615.1"/>
    <property type="molecule type" value="Genomic_DNA"/>
</dbReference>
<dbReference type="EMBL" id="BC011621">
    <property type="protein sequence ID" value="AAH11621.1"/>
    <property type="molecule type" value="mRNA"/>
</dbReference>
<dbReference type="CCDS" id="CCDS612.1">
    <molecule id="Q9UJC3-1"/>
</dbReference>
<dbReference type="RefSeq" id="NP_056972.1">
    <molecule id="Q9UJC3-1"/>
    <property type="nucleotide sequence ID" value="NM_015888.6"/>
</dbReference>
<dbReference type="RefSeq" id="XP_024303288.1">
    <molecule id="Q9UJC3-2"/>
    <property type="nucleotide sequence ID" value="XM_024447520.2"/>
</dbReference>
<dbReference type="RefSeq" id="XP_047278181.1">
    <molecule id="Q9UJC3-2"/>
    <property type="nucleotide sequence ID" value="XM_047422225.1"/>
</dbReference>
<dbReference type="SMR" id="Q9UJC3"/>
<dbReference type="BioGRID" id="119496">
    <property type="interactions" value="258"/>
</dbReference>
<dbReference type="ComplexPortal" id="CPX-2353">
    <property type="entry name" value="FTS-Hook-FHIP cargo adaptor complex, FHIP1A-HOOK1/3 variant"/>
</dbReference>
<dbReference type="ComplexPortal" id="CPX-2356">
    <property type="entry name" value="FTS-Hook-FHIP cargo adaptor complex, FHIP1B-HOOK1/3 variant"/>
</dbReference>
<dbReference type="ComplexPortal" id="CPX-2359">
    <property type="entry name" value="FTS-Hook-FHIP cargo adaptor complex, FHIP2B-HOOK1/2/3 variant"/>
</dbReference>
<dbReference type="CORUM" id="Q9UJC3"/>
<dbReference type="FunCoup" id="Q9UJC3">
    <property type="interactions" value="1402"/>
</dbReference>
<dbReference type="IntAct" id="Q9UJC3">
    <property type="interactions" value="85"/>
</dbReference>
<dbReference type="MINT" id="Q9UJC3"/>
<dbReference type="STRING" id="9606.ENSP00000360252"/>
<dbReference type="GlyCosmos" id="Q9UJC3">
    <property type="glycosylation" value="4 sites, 1 glycan"/>
</dbReference>
<dbReference type="GlyGen" id="Q9UJC3">
    <property type="glycosylation" value="4 sites, 1 O-linked glycan (4 sites)"/>
</dbReference>
<dbReference type="iPTMnet" id="Q9UJC3"/>
<dbReference type="PhosphoSitePlus" id="Q9UJC3"/>
<dbReference type="BioMuta" id="HOOK1"/>
<dbReference type="DMDM" id="41688595"/>
<dbReference type="jPOST" id="Q9UJC3"/>
<dbReference type="MassIVE" id="Q9UJC3"/>
<dbReference type="PaxDb" id="9606-ENSP00000360252"/>
<dbReference type="PeptideAtlas" id="Q9UJC3"/>
<dbReference type="ProteomicsDB" id="2080"/>
<dbReference type="ProteomicsDB" id="84617">
    <molecule id="Q9UJC3-1"/>
</dbReference>
<dbReference type="Pumba" id="Q9UJC3"/>
<dbReference type="Antibodypedia" id="19416">
    <property type="antibodies" value="253 antibodies from 28 providers"/>
</dbReference>
<dbReference type="DNASU" id="51361"/>
<dbReference type="Ensembl" id="ENST00000371208.5">
    <molecule id="Q9UJC3-1"/>
    <property type="protein sequence ID" value="ENSP00000360252.3"/>
    <property type="gene ID" value="ENSG00000134709.13"/>
</dbReference>
<dbReference type="GeneID" id="51361"/>
<dbReference type="KEGG" id="hsa:51361"/>
<dbReference type="MANE-Select" id="ENST00000371208.5">
    <property type="protein sequence ID" value="ENSP00000360252.3"/>
    <property type="RefSeq nucleotide sequence ID" value="NM_015888.6"/>
    <property type="RefSeq protein sequence ID" value="NP_056972.1"/>
</dbReference>
<dbReference type="UCSC" id="uc001czo.3">
    <molecule id="Q9UJC3-1"/>
    <property type="organism name" value="human"/>
</dbReference>
<dbReference type="AGR" id="HGNC:19884"/>
<dbReference type="CTD" id="51361"/>
<dbReference type="DisGeNET" id="51361"/>
<dbReference type="GeneCards" id="HOOK1"/>
<dbReference type="HGNC" id="HGNC:19884">
    <property type="gene designation" value="HOOK1"/>
</dbReference>
<dbReference type="HPA" id="ENSG00000134709">
    <property type="expression patterns" value="Tissue enhanced (retina)"/>
</dbReference>
<dbReference type="MIM" id="607820">
    <property type="type" value="gene"/>
</dbReference>
<dbReference type="neXtProt" id="NX_Q9UJC3"/>
<dbReference type="OpenTargets" id="ENSG00000134709"/>
<dbReference type="PharmGKB" id="PA134945565"/>
<dbReference type="VEuPathDB" id="HostDB:ENSG00000134709"/>
<dbReference type="eggNOG" id="ENOG502QW1T">
    <property type="taxonomic scope" value="Eukaryota"/>
</dbReference>
<dbReference type="GeneTree" id="ENSGT00940000159251"/>
<dbReference type="HOGENOM" id="CLU_011214_1_0_1"/>
<dbReference type="InParanoid" id="Q9UJC3"/>
<dbReference type="OMA" id="TYKKQVQ"/>
<dbReference type="OrthoDB" id="49395at2759"/>
<dbReference type="PAN-GO" id="Q9UJC3">
    <property type="GO annotations" value="6 GO annotations based on evolutionary models"/>
</dbReference>
<dbReference type="PhylomeDB" id="Q9UJC3"/>
<dbReference type="TreeFam" id="TF320231"/>
<dbReference type="PathwayCommons" id="Q9UJC3"/>
<dbReference type="SignaLink" id="Q9UJC3"/>
<dbReference type="SIGNOR" id="Q9UJC3"/>
<dbReference type="BioGRID-ORCS" id="51361">
    <property type="hits" value="15 hits in 1155 CRISPR screens"/>
</dbReference>
<dbReference type="ChiTaRS" id="HOOK1">
    <property type="organism name" value="human"/>
</dbReference>
<dbReference type="GeneWiki" id="HOOK1"/>
<dbReference type="GenomeRNAi" id="51361"/>
<dbReference type="Pharos" id="Q9UJC3">
    <property type="development level" value="Tbio"/>
</dbReference>
<dbReference type="PRO" id="PR:Q9UJC3"/>
<dbReference type="Proteomes" id="UP000005640">
    <property type="component" value="Chromosome 1"/>
</dbReference>
<dbReference type="RNAct" id="Q9UJC3">
    <property type="molecule type" value="protein"/>
</dbReference>
<dbReference type="Bgee" id="ENSG00000134709">
    <property type="expression patterns" value="Expressed in sperm and 158 other cell types or tissues"/>
</dbReference>
<dbReference type="ExpressionAtlas" id="Q9UJC3">
    <property type="expression patterns" value="baseline and differential"/>
</dbReference>
<dbReference type="GO" id="GO:0005813">
    <property type="term" value="C:centrosome"/>
    <property type="evidence" value="ECO:0000318"/>
    <property type="project" value="GO_Central"/>
</dbReference>
<dbReference type="GO" id="GO:0005737">
    <property type="term" value="C:cytoplasm"/>
    <property type="evidence" value="ECO:0000314"/>
    <property type="project" value="UniProtKB"/>
</dbReference>
<dbReference type="GO" id="GO:0070695">
    <property type="term" value="C:FHF complex"/>
    <property type="evidence" value="ECO:0000314"/>
    <property type="project" value="UniProtKB"/>
</dbReference>
<dbReference type="GO" id="GO:0005874">
    <property type="term" value="C:microtubule"/>
    <property type="evidence" value="ECO:0007669"/>
    <property type="project" value="UniProtKB-KW"/>
</dbReference>
<dbReference type="GO" id="GO:0003779">
    <property type="term" value="F:actin binding"/>
    <property type="evidence" value="ECO:0007669"/>
    <property type="project" value="Ensembl"/>
</dbReference>
<dbReference type="GO" id="GO:0051959">
    <property type="term" value="F:dynein light intermediate chain binding"/>
    <property type="evidence" value="ECO:0000318"/>
    <property type="project" value="GO_Central"/>
</dbReference>
<dbReference type="GO" id="GO:0042802">
    <property type="term" value="F:identical protein binding"/>
    <property type="evidence" value="ECO:0000353"/>
    <property type="project" value="UniProtKB"/>
</dbReference>
<dbReference type="GO" id="GO:0008017">
    <property type="term" value="F:microtubule binding"/>
    <property type="evidence" value="ECO:0000318"/>
    <property type="project" value="GO_Central"/>
</dbReference>
<dbReference type="GO" id="GO:0042803">
    <property type="term" value="F:protein homodimerization activity"/>
    <property type="evidence" value="ECO:0000314"/>
    <property type="project" value="UniProtKB"/>
</dbReference>
<dbReference type="GO" id="GO:0031122">
    <property type="term" value="P:cytoplasmic microtubule organization"/>
    <property type="evidence" value="ECO:0000318"/>
    <property type="project" value="GO_Central"/>
</dbReference>
<dbReference type="GO" id="GO:0030705">
    <property type="term" value="P:cytoskeleton-dependent intracellular transport"/>
    <property type="evidence" value="ECO:0000318"/>
    <property type="project" value="GO_Central"/>
</dbReference>
<dbReference type="GO" id="GO:0045022">
    <property type="term" value="P:early endosome to late endosome transport"/>
    <property type="evidence" value="ECO:0000315"/>
    <property type="project" value="UniProtKB"/>
</dbReference>
<dbReference type="GO" id="GO:0007032">
    <property type="term" value="P:endosome organization"/>
    <property type="evidence" value="ECO:0000315"/>
    <property type="project" value="UniProtKB"/>
</dbReference>
<dbReference type="GO" id="GO:0008333">
    <property type="term" value="P:endosome to lysosome transport"/>
    <property type="evidence" value="ECO:0000315"/>
    <property type="project" value="UniProtKB"/>
</dbReference>
<dbReference type="GO" id="GO:0007030">
    <property type="term" value="P:Golgi organization"/>
    <property type="evidence" value="ECO:0007669"/>
    <property type="project" value="Ensembl"/>
</dbReference>
<dbReference type="GO" id="GO:0007040">
    <property type="term" value="P:lysosome organization"/>
    <property type="evidence" value="ECO:0000315"/>
    <property type="project" value="UniProtKB"/>
</dbReference>
<dbReference type="GO" id="GO:1905198">
    <property type="term" value="P:manchette assembly"/>
    <property type="evidence" value="ECO:0007669"/>
    <property type="project" value="Ensembl"/>
</dbReference>
<dbReference type="GO" id="GO:1905719">
    <property type="term" value="P:protein localization to perinuclear region of cytoplasm"/>
    <property type="evidence" value="ECO:0000315"/>
    <property type="project" value="UniProtKB"/>
</dbReference>
<dbReference type="GO" id="GO:0015031">
    <property type="term" value="P:protein transport"/>
    <property type="evidence" value="ECO:0007669"/>
    <property type="project" value="UniProtKB-KW"/>
</dbReference>
<dbReference type="CDD" id="cd22225">
    <property type="entry name" value="HkD_Hook1"/>
    <property type="match status" value="1"/>
</dbReference>
<dbReference type="FunFam" id="1.10.418.10:FF:000024">
    <property type="entry name" value="Hook homolog 3 (Drosophila)"/>
    <property type="match status" value="1"/>
</dbReference>
<dbReference type="Gene3D" id="1.10.418.10">
    <property type="entry name" value="Calponin-like domain"/>
    <property type="match status" value="1"/>
</dbReference>
<dbReference type="InterPro" id="IPR001715">
    <property type="entry name" value="CH_dom"/>
</dbReference>
<dbReference type="InterPro" id="IPR036872">
    <property type="entry name" value="CH_dom_sf"/>
</dbReference>
<dbReference type="InterPro" id="IPR008636">
    <property type="entry name" value="Hook_C"/>
</dbReference>
<dbReference type="InterPro" id="IPR043936">
    <property type="entry name" value="HOOK_N"/>
</dbReference>
<dbReference type="PANTHER" id="PTHR18947">
    <property type="entry name" value="HOOK PROTEINS"/>
    <property type="match status" value="1"/>
</dbReference>
<dbReference type="PANTHER" id="PTHR18947:SF36">
    <property type="entry name" value="PROTEIN HOOK HOMOLOG 1"/>
    <property type="match status" value="1"/>
</dbReference>
<dbReference type="Pfam" id="PF05622">
    <property type="entry name" value="HOOK"/>
    <property type="match status" value="1"/>
</dbReference>
<dbReference type="Pfam" id="PF19047">
    <property type="entry name" value="HOOK_N"/>
    <property type="match status" value="1"/>
</dbReference>
<dbReference type="SUPFAM" id="SSF116907">
    <property type="entry name" value="Hook domain"/>
    <property type="match status" value="1"/>
</dbReference>
<dbReference type="PROSITE" id="PS50021">
    <property type="entry name" value="CH"/>
    <property type="match status" value="1"/>
</dbReference>
<comment type="function">
    <text evidence="1 8 10">Component of the FTS/Hook/FHIP complex (FHF complex) (PubMed:18799622, PubMed:32073997). The FHF complex may function to promote vesicle trafficking and/or fusion via the homotypic vesicular protein sorting complex (the HOPS complex) (PubMed:18799622). FHF complex promotes the distribution of AP-4 complex to the perinuclear area of the cell (PubMed:32073997). Required for spermatid differentiation. Probably involved in the positioning of the microtubules of the manchette and the flagellum in relation to the membrane skeleton (By similarity).</text>
</comment>
<comment type="subunit">
    <text evidence="1 5 6 8 10">Self-associates (PubMed:18799622, PubMed:32073997). Component of the FTS/Hook/FHIP complex (FHF complex), composed of AKTIP/FTS, FHIP1B, and one or more members of the Hook family of proteins HOOK1, HOOK2, and HOOK3 (PubMed:18799622, PubMed:32073997). Interacts directly with AKTIP/FTS, HOOK2 and HOOK3 (PubMed:18799622, PubMed:32073997). Associates with several subunits of the homotypic vesicular sorting complex (the HOPS complex) including VPS16, VPS18, VPS39 and VPS41; these interactions may be indirect (PubMed:18799622). Interacts with CCDC181 (By similarity). Interacts (via coiled-coil region) with RIMBP3 (via C-terminus) (By similarity). Interacts with LRGUK (via guanylate kinase-like domain) (By similarity). Interacts with microtubules (PubMed:11238449). May interact with CLN3 (PubMed:15471887). Interacts with AP4M1; the interaction is direct, mediates the interaction between FTS-Hook-FHIP (FHF) complex and AP-4 and the perinuclear distribution of AP-4 (PubMed:32073997).</text>
</comment>
<comment type="interaction">
    <interactant intactId="EBI-746704">
        <id>Q9UJC3</id>
    </interactant>
    <interactant intactId="EBI-711399">
        <id>Q9H8T0</id>
        <label>AKTIP</label>
    </interactant>
    <organismsDiffer>false</organismsDiffer>
    <experiments>10</experiments>
</comment>
<comment type="interaction">
    <interactant intactId="EBI-746704">
        <id>Q9UJC3</id>
    </interactant>
    <interactant intactId="EBI-5661893">
        <id>Q86SG2</id>
        <label>ANKRD23</label>
    </interactant>
    <organismsDiffer>false</organismsDiffer>
    <experiments>3</experiments>
</comment>
<comment type="interaction">
    <interactant intactId="EBI-746704">
        <id>Q9UJC3</id>
    </interactant>
    <interactant intactId="EBI-3914106">
        <id>O00189</id>
        <label>AP4M1</label>
    </interactant>
    <organismsDiffer>false</organismsDiffer>
    <experiments>4</experiments>
</comment>
<comment type="interaction">
    <interactant intactId="EBI-746704">
        <id>Q9UJC3</id>
    </interactant>
    <interactant intactId="EBI-77613">
        <id>P05067</id>
        <label>APP</label>
    </interactant>
    <organismsDiffer>false</organismsDiffer>
    <experiments>3</experiments>
</comment>
<comment type="interaction">
    <interactant intactId="EBI-746704">
        <id>Q9UJC3</id>
    </interactant>
    <interactant intactId="EBI-750709">
        <id>P35613</id>
        <label>BSG</label>
    </interactant>
    <organismsDiffer>false</organismsDiffer>
    <experiments>3</experiments>
</comment>
<comment type="interaction">
    <interactant intactId="EBI-746704">
        <id>Q9UJC3</id>
    </interactant>
    <interactant intactId="EBI-374880">
        <id>Q99459</id>
        <label>CDC5L</label>
    </interactant>
    <organismsDiffer>false</organismsDiffer>
    <experiments>5</experiments>
</comment>
<comment type="interaction">
    <interactant intactId="EBI-746704">
        <id>Q9UJC3</id>
    </interactant>
    <interactant intactId="EBI-295644">
        <id>P11802</id>
        <label>CDK4</label>
    </interactant>
    <organismsDiffer>false</organismsDiffer>
    <experiments>14</experiments>
</comment>
<comment type="interaction">
    <interactant intactId="EBI-746704">
        <id>Q9UJC3</id>
    </interactant>
    <interactant intactId="EBI-1041567">
        <id>Q00535</id>
        <label>CDK5</label>
    </interactant>
    <organismsDiffer>false</organismsDiffer>
    <experiments>3</experiments>
</comment>
<comment type="interaction">
    <interactant intactId="EBI-746704">
        <id>Q9UJC3</id>
    </interactant>
    <interactant intactId="EBI-5453285">
        <id>Q2TBE0</id>
        <label>CWF19L2</label>
    </interactant>
    <organismsDiffer>false</organismsDiffer>
    <experiments>3</experiments>
</comment>
<comment type="interaction">
    <interactant intactId="EBI-746704">
        <id>Q9UJC3</id>
    </interactant>
    <interactant intactId="EBI-719941">
        <id>Q3B820</id>
        <label>FAM161A</label>
    </interactant>
    <organismsDiffer>false</organismsDiffer>
    <experiments>5</experiments>
</comment>
<comment type="interaction">
    <interactant intactId="EBI-746704">
        <id>Q9UJC3</id>
    </interactant>
    <interactant intactId="EBI-32806369">
        <id>Q8N612-1</id>
        <label>FHIP1B</label>
    </interactant>
    <organismsDiffer>false</organismsDiffer>
    <experiments>3</experiments>
</comment>
<comment type="interaction">
    <interactant intactId="EBI-746704">
        <id>Q9UJC3</id>
    </interactant>
    <interactant intactId="EBI-746704">
        <id>Q9UJC3</id>
        <label>HOOK1</label>
    </interactant>
    <organismsDiffer>false</organismsDiffer>
    <experiments>6</experiments>
</comment>
<comment type="interaction">
    <interactant intactId="EBI-746704">
        <id>Q9UJC3</id>
    </interactant>
    <interactant intactId="EBI-1777078">
        <id>Q86VS8</id>
        <label>HOOK3</label>
    </interactant>
    <organismsDiffer>false</organismsDiffer>
    <experiments>8</experiments>
</comment>
<comment type="interaction">
    <interactant intactId="EBI-746704">
        <id>Q9UJC3</id>
    </interactant>
    <interactant intactId="EBI-739696">
        <id>P25791</id>
        <label>LMO2</label>
    </interactant>
    <organismsDiffer>false</organismsDiffer>
    <experiments>3</experiments>
</comment>
<comment type="interaction">
    <interactant intactId="EBI-746704">
        <id>Q9UJC3</id>
    </interactant>
    <interactant intactId="EBI-11959475">
        <id>P25791-3</id>
        <label>LMO2</label>
    </interactant>
    <organismsDiffer>false</organismsDiffer>
    <experiments>3</experiments>
</comment>
<comment type="interaction">
    <interactant intactId="EBI-746704">
        <id>Q9UJC3</id>
    </interactant>
    <interactant intactId="EBI-16439278">
        <id>Q6FHY5</id>
        <label>MEOX2</label>
    </interactant>
    <organismsDiffer>false</organismsDiffer>
    <experiments>3</experiments>
</comment>
<comment type="interaction">
    <interactant intactId="EBI-746704">
        <id>Q9UJC3</id>
    </interactant>
    <interactant intactId="EBI-347233">
        <id>O75376</id>
        <label>NCOR1</label>
    </interactant>
    <organismsDiffer>false</organismsDiffer>
    <experiments>3</experiments>
</comment>
<comment type="interaction">
    <interactant intactId="EBI-746704">
        <id>Q9UJC3</id>
    </interactant>
    <interactant intactId="EBI-348567">
        <id>O75928-2</id>
        <label>PIAS2</label>
    </interactant>
    <organismsDiffer>false</organismsDiffer>
    <experiments>3</experiments>
</comment>
<comment type="interaction">
    <interactant intactId="EBI-746704">
        <id>Q9UJC3</id>
    </interactant>
    <interactant intactId="EBI-6872807">
        <id>Q8N0S2</id>
        <label>SYCE1</label>
    </interactant>
    <organismsDiffer>false</organismsDiffer>
    <experiments>4</experiments>
</comment>
<comment type="interaction">
    <interactant intactId="EBI-746704">
        <id>Q9UJC3</id>
    </interactant>
    <interactant intactId="EBI-3258000">
        <id>Q9P0N9</id>
        <label>TBC1D7</label>
    </interactant>
    <organismsDiffer>false</organismsDiffer>
    <experiments>7</experiments>
</comment>
<comment type="interaction">
    <interactant intactId="EBI-746704">
        <id>Q9UJC3</id>
    </interactant>
    <interactant intactId="EBI-1105213">
        <id>Q9UBB9</id>
        <label>TFIP11</label>
    </interactant>
    <organismsDiffer>false</organismsDiffer>
    <experiments>8</experiments>
</comment>
<comment type="interaction">
    <interactant intactId="EBI-746704">
        <id>Q9UJC3</id>
    </interactant>
    <interactant intactId="EBI-743272">
        <id>O75604</id>
        <label>USP2</label>
    </interactant>
    <organismsDiffer>false</organismsDiffer>
    <experiments>3</experiments>
</comment>
<comment type="interaction">
    <interactant intactId="EBI-746704">
        <id>Q9UJC3</id>
    </interactant>
    <interactant intactId="EBI-11737646">
        <id>Q5TAP6</id>
        <label>UTP14C</label>
    </interactant>
    <organismsDiffer>false</organismsDiffer>
    <experiments>3</experiments>
</comment>
<comment type="interaction">
    <interactant intactId="EBI-746704">
        <id>Q9UJC3</id>
    </interactant>
    <interactant intactId="EBI-7781767">
        <id>Q9UFB7</id>
        <label>ZBTB47</label>
    </interactant>
    <organismsDiffer>false</organismsDiffer>
    <experiments>3</experiments>
</comment>
<comment type="interaction">
    <interactant intactId="EBI-746704">
        <id>Q9UJC3</id>
    </interactant>
    <interactant intactId="EBI-11041653">
        <id>P13682</id>
        <label>ZNF35</label>
    </interactant>
    <organismsDiffer>false</organismsDiffer>
    <experiments>3</experiments>
</comment>
<comment type="interaction">
    <interactant intactId="EBI-746704">
        <id>Q9UJC3</id>
    </interactant>
    <interactant intactId="EBI-10172590">
        <id>Q7Z3I7</id>
        <label>ZNF572</label>
    </interactant>
    <organismsDiffer>false</organismsDiffer>
    <experiments>3</experiments>
</comment>
<comment type="interaction">
    <interactant intactId="EBI-746704">
        <id>Q9UJC3</id>
    </interactant>
    <interactant intactId="EBI-625509">
        <id>Q8N720</id>
        <label>ZNF655</label>
    </interactant>
    <organismsDiffer>false</organismsDiffer>
    <experiments>3</experiments>
</comment>
<comment type="interaction">
    <interactant intactId="EBI-746704">
        <id>Q9UJC3</id>
    </interactant>
    <interactant intactId="EBI-745775">
        <id>Q96H86</id>
        <label>ZNF764</label>
    </interactant>
    <organismsDiffer>false</organismsDiffer>
    <experiments>3</experiments>
</comment>
<comment type="interaction">
    <interactant intactId="EBI-746704">
        <id>Q9UJC3</id>
    </interactant>
    <interactant intactId="EBI-3925400">
        <id>A8K8V0</id>
        <label>ZNF785</label>
    </interactant>
    <organismsDiffer>false</organismsDiffer>
    <experiments>3</experiments>
</comment>
<comment type="interaction">
    <interactant intactId="EBI-746704">
        <id>Q9UJC3</id>
    </interactant>
    <interactant intactId="EBI-12013828">
        <id>P51504</id>
        <label>ZNF80</label>
    </interactant>
    <organismsDiffer>false</organismsDiffer>
    <experiments>3</experiments>
</comment>
<comment type="subcellular location">
    <subcellularLocation>
        <location evidence="6">Cytoplasm</location>
    </subcellularLocation>
    <subcellularLocation>
        <location evidence="5">Cytoplasm</location>
        <location evidence="5">Cytoskeleton</location>
    </subcellularLocation>
    <text evidence="1">Localizes to punctate cytoplasmic foci which do not appear to overlap with early or late endosomes, the endoplasmic reticulum, multivesicular bodies (MVBs), lysosomes, or mitochondria (By similarity). Often found in close association with microtubules (By similarity). Does not associate with the Golgi complex. During spermiogenesis, it localizes to the manchette in spermatids from steps 8-10. It is also present between the microtubule manchette and the nucleus. During manchette elongation, it is preferentially localized to the nuclear ring of the manchette, whereas the strong localization to the manchette decreases. In more mature spermatids, while the manchette migrates posteriorly, it localizes to punctuates spots. At later stages of spermatid differentiation, the punctuate expression pattern is found at both the attachment site and the proximal end of the elongated manchette. In contrast, it is not present in mature spermatozoa (By similarity).</text>
</comment>
<comment type="alternative products">
    <event type="alternative splicing"/>
    <isoform>
        <id>Q9UJC3-1</id>
        <name>1</name>
        <sequence type="displayed"/>
    </isoform>
    <isoform>
        <id>Q9UJC3-2</id>
        <name>2</name>
        <sequence type="described" ref="VSP_056226"/>
    </isoform>
</comment>
<comment type="similarity">
    <text evidence="12">Belongs to the hook family.</text>
</comment>
<protein>
    <recommendedName>
        <fullName evidence="12">Protein Hook homolog 1</fullName>
        <shortName>h-hook1</shortName>
        <shortName>hHK1</shortName>
    </recommendedName>
</protein>
<sequence length="728" mass="84648">MEETQPPPQPKLPLCDSLMIWLQTFNTASPCQDVKQLTSGVAMAQVLHQIDAAWFNESWLSRIKEDVGDNWRIKASNVKKVLQGIMSYYHEFLGQQISEALIPDLNQITECSDPVELGRLLQLILGCAINCEKKQEHIQNIMTLEESVQHVVMTAIQELMSKEILSSPPNDAVGELEQQLKRALEELQEALAEKEELRQRCEELDMQVTTLQDEKNSLVSENEMMNEKLDQLDGSFDDPNTVVAKKYFHAQLQLEQLQEENFRLEAAKDDYRVHCEELEKQLIEFQHRNDELTSLAEETRALKDEIDVLRATSDKANKLESTVEIYRQKLQDLNDLRKQVKTLQETNMMYMHNTVSLEEELKKANAARTQLETYKRQVQDLHVKLSSESKRADTLAFEMKRLEEKHEALLKEKERLIEQRDTLKETNEELRCSQVQQDHLNQTDASATKSYENLAAEIMPVEYREVFIRLQHENKMLRLQQEGSENERIEELQEQLEQKHRKMNELETEQRLSKERIRELQQQIEDLQKSLQEQGSKSEGESSSKLKQKLEAHMEKLTEVHEELQKKQELIEDLQPDINQNVQKINELEAALQKKDEDMKAMEERYKMYLEKARNVIKTLDPKLNPASAEIMLLRKQLAEKERRIEILESECKVAKFRDYEEKLIVSAWYNKSLAFQKLGMESRLVSGGGACSDTGACTPARSFLAQQRHITNTRRNLSVKVPATTSD</sequence>